<name>CAPSD_SPTNK</name>
<protein>
    <recommendedName>
        <fullName>Putative capsid protein V20</fullName>
    </recommendedName>
</protein>
<sequence>MSNSAIPLNVVAVQEPRLELNNERTWVVVKGGQQVTYYPFPSTSFSSNQFNFICNPPSAQTVLDRLVFIQVPYDITFTANPSHAGITENLLQPGRDAFRAFPISSITNTLNATINGFPVNIELAQIIHALSRYHTPLKVKNGWMSMQPSFEDNYQSYRDADGANNNPLGVFTSAAGLSELPRGSYTMNVVTNTTTTARITGVLYEQVFLPPFLWDGEQAGGLANLTSLTFNWVLNNNLARIWSHSDITNDVSGNSTIGSMNISFQQPSMYLGFVTPRLNIPIPPRITYPYFKLSRYTTQFQNTLAPNASSTFKSNVVQLDSIPRKLYLFVKQSDNVIYQNLNNQITTPDVFLQINNLNLTWNNQQGILSGASSQNLYDFSVQNGYNKTWSEFNGVTQQFNGVSGQPTKVIGLEGGIVCLELGKDVGLRDDEAEGVIGNFNLQVQMTVTNTNQYVTVTPDMYIVAVYDGTLVISNTSAMASIGVASKEEVLNARITHGVSYNELQRIYGGDFFSSFKNFLGKVGNVAGKVNNFLKDSKIASSVLGAIPHPYAQVPGQILKNVGYGESHVGGGKKKGGVLIGGRQLTKAELRKELKM</sequence>
<keyword id="KW-0002">3D-structure</keyword>
<keyword id="KW-0167">Capsid protein</keyword>
<keyword id="KW-1185">Reference proteome</keyword>
<keyword id="KW-0946">Virion</keyword>
<organism>
    <name type="scientific">Sputnik virophage</name>
    <dbReference type="NCBI Taxonomy" id="543939"/>
    <lineage>
        <taxon>Viruses</taxon>
        <taxon>Varidnaviria</taxon>
        <taxon>Bamfordvirae</taxon>
        <taxon>Preplasmiviricota</taxon>
        <taxon>Maveriviricetes</taxon>
        <taxon>Priklausovirales</taxon>
        <taxon>Lavidaviridae</taxon>
        <taxon>Sputnikvirus</taxon>
        <taxon>Mimivirus-dependent virus Sputnik</taxon>
    </lineage>
</organism>
<evidence type="ECO:0007829" key="1">
    <source>
        <dbReference type="PDB" id="3J26"/>
    </source>
</evidence>
<proteinExistence type="evidence at protein level"/>
<dbReference type="EMBL" id="EU606015">
    <property type="protein sequence ID" value="ACF17004.1"/>
    <property type="molecule type" value="Genomic_DNA"/>
</dbReference>
<dbReference type="RefSeq" id="YP_002122381.1">
    <property type="nucleotide sequence ID" value="NC_011132.1"/>
</dbReference>
<dbReference type="PDB" id="3J26">
    <property type="method" value="EM"/>
    <property type="resolution" value="3.50 A"/>
    <property type="chains" value="A/B/C/D/E/F/G/H/I/J/K/L/M=1-508"/>
</dbReference>
<dbReference type="PDBsum" id="3J26"/>
<dbReference type="SMR" id="B4YNG0"/>
<dbReference type="IntAct" id="B4YNG0">
    <property type="interactions" value="1"/>
</dbReference>
<dbReference type="KEGG" id="vg:6760338"/>
<dbReference type="OrthoDB" id="29470at10239"/>
<dbReference type="EvolutionaryTrace" id="B4YNG0"/>
<dbReference type="Proteomes" id="UP000001863">
    <property type="component" value="Segment"/>
</dbReference>
<dbReference type="GO" id="GO:0019028">
    <property type="term" value="C:viral capsid"/>
    <property type="evidence" value="ECO:0007669"/>
    <property type="project" value="UniProtKB-KW"/>
</dbReference>
<dbReference type="InterPro" id="IPR053887">
    <property type="entry name" value="MCP_V20_C"/>
</dbReference>
<dbReference type="InterPro" id="IPR053889">
    <property type="entry name" value="Sputnik_MCP_N"/>
</dbReference>
<dbReference type="Pfam" id="PF22031">
    <property type="entry name" value="MCP_V20_C"/>
    <property type="match status" value="1"/>
</dbReference>
<dbReference type="Pfam" id="PF21915">
    <property type="entry name" value="Sputnik_MCP_1st"/>
    <property type="match status" value="1"/>
</dbReference>
<accession>B4YNG0</accession>
<reference key="1">
    <citation type="journal article" date="2008" name="Nature">
        <title>The virophage as a unique parasite of the giant mimivirus.</title>
        <authorList>
            <person name="La Scola B."/>
            <person name="Desnues C."/>
            <person name="Pagnier I."/>
            <person name="Robert C."/>
            <person name="Barrassi L."/>
            <person name="Fournous G."/>
            <person name="Merchat M."/>
            <person name="Suzan-Monti M."/>
            <person name="Forterre P."/>
            <person name="Koonin E."/>
            <person name="Raoult D."/>
        </authorList>
    </citation>
    <scope>NUCLEOTIDE SEQUENCE [GENOMIC DNA]</scope>
    <scope>IDENTIFICATION BY MASS SPECTROMETRY</scope>
</reference>
<feature type="chain" id="PRO_0000369828" description="Putative capsid protein V20">
    <location>
        <begin position="1"/>
        <end position="595"/>
    </location>
</feature>
<feature type="strand" evidence="1">
    <location>
        <begin position="4"/>
        <end position="6"/>
    </location>
</feature>
<feature type="strand" evidence="1">
    <location>
        <begin position="36"/>
        <end position="38"/>
    </location>
</feature>
<feature type="strand" evidence="1">
    <location>
        <begin position="47"/>
        <end position="54"/>
    </location>
</feature>
<feature type="strand" evidence="1">
    <location>
        <begin position="57"/>
        <end position="61"/>
    </location>
</feature>
<feature type="strand" evidence="1">
    <location>
        <begin position="68"/>
        <end position="78"/>
    </location>
</feature>
<feature type="strand" evidence="1">
    <location>
        <begin position="81"/>
        <end position="83"/>
    </location>
</feature>
<feature type="strand" evidence="1">
    <location>
        <begin position="95"/>
        <end position="98"/>
    </location>
</feature>
<feature type="helix" evidence="1">
    <location>
        <begin position="102"/>
        <end position="105"/>
    </location>
</feature>
<feature type="strand" evidence="1">
    <location>
        <begin position="107"/>
        <end position="114"/>
    </location>
</feature>
<feature type="strand" evidence="1">
    <location>
        <begin position="117"/>
        <end position="121"/>
    </location>
</feature>
<feature type="turn" evidence="1">
    <location>
        <begin position="123"/>
        <end position="125"/>
    </location>
</feature>
<feature type="helix" evidence="1">
    <location>
        <begin position="127"/>
        <end position="130"/>
    </location>
</feature>
<feature type="turn" evidence="1">
    <location>
        <begin position="132"/>
        <end position="134"/>
    </location>
</feature>
<feature type="helix" evidence="1">
    <location>
        <begin position="137"/>
        <end position="140"/>
    </location>
</feature>
<feature type="helix" evidence="1">
    <location>
        <begin position="143"/>
        <end position="145"/>
    </location>
</feature>
<feature type="strand" evidence="1">
    <location>
        <begin position="154"/>
        <end position="156"/>
    </location>
</feature>
<feature type="helix" evidence="1">
    <location>
        <begin position="157"/>
        <end position="160"/>
    </location>
</feature>
<feature type="strand" evidence="1">
    <location>
        <begin position="171"/>
        <end position="174"/>
    </location>
</feature>
<feature type="strand" evidence="1">
    <location>
        <begin position="176"/>
        <end position="178"/>
    </location>
</feature>
<feature type="strand" evidence="1">
    <location>
        <begin position="188"/>
        <end position="193"/>
    </location>
</feature>
<feature type="strand" evidence="1">
    <location>
        <begin position="196"/>
        <end position="206"/>
    </location>
</feature>
<feature type="strand" evidence="1">
    <location>
        <begin position="215"/>
        <end position="217"/>
    </location>
</feature>
<feature type="strand" evidence="1">
    <location>
        <begin position="228"/>
        <end position="234"/>
    </location>
</feature>
<feature type="strand" evidence="1">
    <location>
        <begin position="240"/>
        <end position="244"/>
    </location>
</feature>
<feature type="helix" evidence="1">
    <location>
        <begin position="246"/>
        <end position="248"/>
    </location>
</feature>
<feature type="strand" evidence="1">
    <location>
        <begin position="251"/>
        <end position="253"/>
    </location>
</feature>
<feature type="strand" evidence="1">
    <location>
        <begin position="268"/>
        <end position="273"/>
    </location>
</feature>
<feature type="strand" evidence="1">
    <location>
        <begin position="284"/>
        <end position="299"/>
    </location>
</feature>
<feature type="strand" evidence="1">
    <location>
        <begin position="309"/>
        <end position="312"/>
    </location>
</feature>
<feature type="strand" evidence="1">
    <location>
        <begin position="317"/>
        <end position="321"/>
    </location>
</feature>
<feature type="strand" evidence="1">
    <location>
        <begin position="324"/>
        <end position="332"/>
    </location>
</feature>
<feature type="strand" evidence="1">
    <location>
        <begin position="334"/>
        <end position="340"/>
    </location>
</feature>
<feature type="helix" evidence="1">
    <location>
        <begin position="342"/>
        <end position="346"/>
    </location>
</feature>
<feature type="strand" evidence="1">
    <location>
        <begin position="353"/>
        <end position="361"/>
    </location>
</feature>
<feature type="turn" evidence="1">
    <location>
        <begin position="362"/>
        <end position="364"/>
    </location>
</feature>
<feature type="turn" evidence="1">
    <location>
        <begin position="368"/>
        <end position="370"/>
    </location>
</feature>
<feature type="turn" evidence="1">
    <location>
        <begin position="373"/>
        <end position="380"/>
    </location>
</feature>
<feature type="strand" evidence="1">
    <location>
        <begin position="381"/>
        <end position="384"/>
    </location>
</feature>
<feature type="turn" evidence="1">
    <location>
        <begin position="389"/>
        <end position="394"/>
    </location>
</feature>
<feature type="strand" evidence="1">
    <location>
        <begin position="396"/>
        <end position="398"/>
    </location>
</feature>
<feature type="strand" evidence="1">
    <location>
        <begin position="408"/>
        <end position="410"/>
    </location>
</feature>
<feature type="strand" evidence="1">
    <location>
        <begin position="417"/>
        <end position="420"/>
    </location>
</feature>
<feature type="turn" evidence="1">
    <location>
        <begin position="421"/>
        <end position="423"/>
    </location>
</feature>
<feature type="strand" evidence="1">
    <location>
        <begin position="436"/>
        <end position="448"/>
    </location>
</feature>
<feature type="strand" evidence="1">
    <location>
        <begin position="458"/>
        <end position="473"/>
    </location>
</feature>
<feature type="strand" evidence="1">
    <location>
        <begin position="476"/>
        <end position="478"/>
    </location>
</feature>
<feature type="helix" evidence="1">
    <location>
        <begin position="486"/>
        <end position="489"/>
    </location>
</feature>
<feature type="strand" evidence="1">
    <location>
        <begin position="496"/>
        <end position="498"/>
    </location>
</feature>
<feature type="helix" evidence="1">
    <location>
        <begin position="500"/>
        <end position="503"/>
    </location>
</feature>
<organismHost>
    <name type="scientific">Acanthamoeba polyphaga</name>
    <name type="common">Amoeba</name>
    <dbReference type="NCBI Taxonomy" id="5757"/>
</organismHost>
<gene>
    <name type="ORF">ORF20</name>
</gene>
<comment type="function">
    <text>May self assemble to form an icosahedral capsid. Most abundant protein in the virion.</text>
</comment>
<comment type="subcellular location">
    <subcellularLocation>
        <location>Virion</location>
    </subcellularLocation>
</comment>